<protein>
    <recommendedName>
        <fullName>Testin</fullName>
    </recommendedName>
    <alternativeName>
        <fullName>TES1/TES2</fullName>
    </alternativeName>
</protein>
<feature type="chain" id="PRO_0000075907" description="Testin">
    <location>
        <begin position="1"/>
        <end position="423"/>
    </location>
</feature>
<feature type="domain" description="PET" evidence="3">
    <location>
        <begin position="97"/>
        <end position="204"/>
    </location>
</feature>
<feature type="domain" description="LIM zinc-binding 1" evidence="2">
    <location>
        <begin position="236"/>
        <end position="299"/>
    </location>
</feature>
<feature type="domain" description="LIM zinc-binding 2" evidence="2">
    <location>
        <begin position="301"/>
        <end position="361"/>
    </location>
</feature>
<feature type="domain" description="LIM zinc-binding 3" evidence="2">
    <location>
        <begin position="364"/>
        <end position="423"/>
    </location>
</feature>
<feature type="region of interest" description="Disordered" evidence="4">
    <location>
        <begin position="1"/>
        <end position="21"/>
    </location>
</feature>
<feature type="region of interest" description="Disordered" evidence="4">
    <location>
        <begin position="138"/>
        <end position="169"/>
    </location>
</feature>
<feature type="compositionally biased region" description="Basic and acidic residues" evidence="4">
    <location>
        <begin position="160"/>
        <end position="169"/>
    </location>
</feature>
<feature type="splice variant" id="VSP_003123" description="In isoform TES1." evidence="7">
    <location>
        <begin position="1"/>
        <end position="55"/>
    </location>
</feature>
<dbReference type="EMBL" id="X78990">
    <property type="protein sequence ID" value="CAA55590.1"/>
    <property type="molecule type" value="mRNA"/>
</dbReference>
<dbReference type="EMBL" id="X78989">
    <property type="protein sequence ID" value="CAA55589.1"/>
    <property type="molecule type" value="mRNA"/>
</dbReference>
<dbReference type="PIR" id="I48842">
    <property type="entry name" value="I48842"/>
</dbReference>
<dbReference type="SMR" id="P47226"/>
<dbReference type="FunCoup" id="P47226">
    <property type="interactions" value="544"/>
</dbReference>
<dbReference type="STRING" id="10090.ENSMUSP00000111127"/>
<dbReference type="iPTMnet" id="P47226"/>
<dbReference type="PhosphoSitePlus" id="P47226"/>
<dbReference type="PaxDb" id="10090-ENSMUSP00000111127"/>
<dbReference type="PeptideAtlas" id="P47226"/>
<dbReference type="ProteomicsDB" id="263281">
    <molecule id="P47226-1"/>
</dbReference>
<dbReference type="ProteomicsDB" id="263282">
    <molecule id="P47226-2"/>
</dbReference>
<dbReference type="Pumba" id="P47226"/>
<dbReference type="AGR" id="MGI:105081"/>
<dbReference type="MGI" id="MGI:105081">
    <property type="gene designation" value="Tes"/>
</dbReference>
<dbReference type="eggNOG" id="KOG1704">
    <property type="taxonomic scope" value="Eukaryota"/>
</dbReference>
<dbReference type="InParanoid" id="P47226"/>
<dbReference type="PhylomeDB" id="P47226"/>
<dbReference type="ChiTaRS" id="Tes">
    <property type="organism name" value="mouse"/>
</dbReference>
<dbReference type="PRO" id="PR:P47226"/>
<dbReference type="Proteomes" id="UP000000589">
    <property type="component" value="Unplaced"/>
</dbReference>
<dbReference type="RNAct" id="P47226">
    <property type="molecule type" value="protein"/>
</dbReference>
<dbReference type="GO" id="GO:0005737">
    <property type="term" value="C:cytoplasm"/>
    <property type="evidence" value="ECO:0000314"/>
    <property type="project" value="UniProtKB"/>
</dbReference>
<dbReference type="GO" id="GO:0005925">
    <property type="term" value="C:focal adhesion"/>
    <property type="evidence" value="ECO:0007669"/>
    <property type="project" value="UniProtKB-SubCell"/>
</dbReference>
<dbReference type="GO" id="GO:0008270">
    <property type="term" value="F:zinc ion binding"/>
    <property type="evidence" value="ECO:0000250"/>
    <property type="project" value="UniProtKB"/>
</dbReference>
<dbReference type="GO" id="GO:0008285">
    <property type="term" value="P:negative regulation of cell population proliferation"/>
    <property type="evidence" value="ECO:0000250"/>
    <property type="project" value="UniProtKB"/>
</dbReference>
<dbReference type="CDD" id="cd09413">
    <property type="entry name" value="LIM1_Testin"/>
    <property type="match status" value="1"/>
</dbReference>
<dbReference type="CDD" id="cd09416">
    <property type="entry name" value="LIM2_Testin"/>
    <property type="match status" value="1"/>
</dbReference>
<dbReference type="CDD" id="cd09419">
    <property type="entry name" value="LIM3_Testin"/>
    <property type="match status" value="1"/>
</dbReference>
<dbReference type="CDD" id="cd09829">
    <property type="entry name" value="PET_testin"/>
    <property type="match status" value="1"/>
</dbReference>
<dbReference type="FunFam" id="2.10.110.10:FF:000061">
    <property type="entry name" value="Testin"/>
    <property type="match status" value="1"/>
</dbReference>
<dbReference type="FunFam" id="2.10.110.10:FF:000065">
    <property type="entry name" value="Testin"/>
    <property type="match status" value="1"/>
</dbReference>
<dbReference type="FunFam" id="2.10.110.10:FF:000005">
    <property type="entry name" value="Testin isoform 1"/>
    <property type="match status" value="1"/>
</dbReference>
<dbReference type="Gene3D" id="2.10.110.10">
    <property type="entry name" value="Cysteine Rich Protein"/>
    <property type="match status" value="3"/>
</dbReference>
<dbReference type="InterPro" id="IPR034958">
    <property type="entry name" value="LIM1_Testin"/>
</dbReference>
<dbReference type="InterPro" id="IPR034959">
    <property type="entry name" value="LIM2_Testin"/>
</dbReference>
<dbReference type="InterPro" id="IPR034960">
    <property type="entry name" value="LIM3_Testin"/>
</dbReference>
<dbReference type="InterPro" id="IPR010442">
    <property type="entry name" value="PET_domain"/>
</dbReference>
<dbReference type="InterPro" id="IPR033724">
    <property type="entry name" value="PET_testin"/>
</dbReference>
<dbReference type="InterPro" id="IPR047120">
    <property type="entry name" value="Pk/Esn/Tes"/>
</dbReference>
<dbReference type="InterPro" id="IPR001781">
    <property type="entry name" value="Znf_LIM"/>
</dbReference>
<dbReference type="PANTHER" id="PTHR24211">
    <property type="entry name" value="LIM DOMAIN-CONTAINING PROTEIN"/>
    <property type="match status" value="1"/>
</dbReference>
<dbReference type="PANTHER" id="PTHR24211:SF1">
    <property type="entry name" value="TESTIN"/>
    <property type="match status" value="1"/>
</dbReference>
<dbReference type="Pfam" id="PF00412">
    <property type="entry name" value="LIM"/>
    <property type="match status" value="3"/>
</dbReference>
<dbReference type="Pfam" id="PF06297">
    <property type="entry name" value="PET"/>
    <property type="match status" value="1"/>
</dbReference>
<dbReference type="SMART" id="SM00132">
    <property type="entry name" value="LIM"/>
    <property type="match status" value="3"/>
</dbReference>
<dbReference type="SUPFAM" id="SSF57716">
    <property type="entry name" value="Glucocorticoid receptor-like (DNA-binding domain)"/>
    <property type="match status" value="2"/>
</dbReference>
<dbReference type="PROSITE" id="PS00478">
    <property type="entry name" value="LIM_DOMAIN_1"/>
    <property type="match status" value="2"/>
</dbReference>
<dbReference type="PROSITE" id="PS50023">
    <property type="entry name" value="LIM_DOMAIN_2"/>
    <property type="match status" value="3"/>
</dbReference>
<dbReference type="PROSITE" id="PS51303">
    <property type="entry name" value="PET"/>
    <property type="match status" value="1"/>
</dbReference>
<proteinExistence type="evidence at protein level"/>
<organism>
    <name type="scientific">Mus musculus</name>
    <name type="common">Mouse</name>
    <dbReference type="NCBI Taxonomy" id="10090"/>
    <lineage>
        <taxon>Eukaryota</taxon>
        <taxon>Metazoa</taxon>
        <taxon>Chordata</taxon>
        <taxon>Craniata</taxon>
        <taxon>Vertebrata</taxon>
        <taxon>Euteleostomi</taxon>
        <taxon>Mammalia</taxon>
        <taxon>Eutheria</taxon>
        <taxon>Euarchontoglires</taxon>
        <taxon>Glires</taxon>
        <taxon>Rodentia</taxon>
        <taxon>Myomorpha</taxon>
        <taxon>Muroidea</taxon>
        <taxon>Muridae</taxon>
        <taxon>Murinae</taxon>
        <taxon>Mus</taxon>
        <taxon>Mus</taxon>
    </lineage>
</organism>
<keyword id="KW-0025">Alternative splicing</keyword>
<keyword id="KW-0965">Cell junction</keyword>
<keyword id="KW-0963">Cytoplasm</keyword>
<keyword id="KW-0440">LIM domain</keyword>
<keyword id="KW-0479">Metal-binding</keyword>
<keyword id="KW-1185">Reference proteome</keyword>
<keyword id="KW-0677">Repeat</keyword>
<keyword id="KW-0862">Zinc</keyword>
<sequence>MSATHPTRLGTRTKESNACASQGLVRKPPWANEGEGFELHFWRKICRNCNVVKKSMTVLLSNEEDRKVGRLFEDTKYTTLIAKLKSDGIPMYKRNVMILTNPVAAKKNVSINTVTYEWAPPVQNQALARQYMQMLPKEKQPVAGSEGAQYRKKQLAKQLPAHDQDPSKCHELSPKEVKEMEQFVKKYKSEALGVGDVKFPSEMNAQGDKVHNCGNRHAPAAVASKDKSAESKKTQYSCYCCKHTTNEGEPAIYAERAGYDKLWHPACFICSTCGELLVDMIYFWKNGKLYCGRHYCDSEKPRCAGCDELIFSNEYTQAENQNWHLKHFCCFDCDHILAGKIYVMVTDKPVCKPCYVKNHAVVCQGCHNAIDPEVQRVTYNNFSWHASTECFLCSCCSKCLIGQKFMPVEGMVFCSVECKRMMS</sequence>
<reference key="1">
    <citation type="journal article" date="1995" name="Gene">
        <title>Cloning and characterisation of two new cDNAs encoding murine triple LIM domains.</title>
        <authorList>
            <person name="Divecha N."/>
            <person name="Charleston B."/>
        </authorList>
    </citation>
    <scope>NUCLEOTIDE SEQUENCE [MRNA] (ISOFORMS TES1 AND TES2)</scope>
    <source>
        <tissue>Testis</tissue>
    </source>
</reference>
<reference key="2">
    <citation type="journal article" date="2005" name="Proc. Natl. Acad. Sci. U.S.A.">
        <title>Knockout mice reveal a tumor suppressor function for Testin.</title>
        <authorList>
            <person name="Drusco A."/>
            <person name="Zanesi N."/>
            <person name="Roldo C."/>
            <person name="Trapasso F."/>
            <person name="Farber J.L."/>
            <person name="Fong L.Y."/>
            <person name="Croce C.M."/>
        </authorList>
    </citation>
    <scope>DISRUPTION PHENOTYPE</scope>
</reference>
<reference key="3">
    <citation type="journal article" date="2010" name="Cell">
        <title>A tissue-specific atlas of mouse protein phosphorylation and expression.</title>
        <authorList>
            <person name="Huttlin E.L."/>
            <person name="Jedrychowski M.P."/>
            <person name="Elias J.E."/>
            <person name="Goswami T."/>
            <person name="Rad R."/>
            <person name="Beausoleil S.A."/>
            <person name="Villen J."/>
            <person name="Haas W."/>
            <person name="Sowa M.E."/>
            <person name="Gygi S.P."/>
        </authorList>
    </citation>
    <scope>IDENTIFICATION BY MASS SPECTROMETRY [LARGE SCALE ANALYSIS]</scope>
    <source>
        <tissue>Pancreas</tissue>
        <tissue>Spleen</tissue>
    </source>
</reference>
<reference key="4">
    <citation type="journal article" date="2011" name="J. Biol. Chem.">
        <title>Molecular recognition of the Tes LIM2-3 domains by the actin-related protein Arp7A.</title>
        <authorList>
            <person name="Boeda B."/>
            <person name="Knowles P.P."/>
            <person name="Briggs D.C."/>
            <person name="Murray-Rust J."/>
            <person name="Soriano E."/>
            <person name="Garvalov B.K."/>
            <person name="McDonald N.Q."/>
            <person name="Way M."/>
        </authorList>
    </citation>
    <scope>SUBCELLULAR LOCATION</scope>
    <scope>TISSUE SPECIFICITY</scope>
</reference>
<accession>P47226</accession>
<evidence type="ECO:0000250" key="1"/>
<evidence type="ECO:0000255" key="2">
    <source>
        <dbReference type="PROSITE-ProRule" id="PRU00125"/>
    </source>
</evidence>
<evidence type="ECO:0000255" key="3">
    <source>
        <dbReference type="PROSITE-ProRule" id="PRU00636"/>
    </source>
</evidence>
<evidence type="ECO:0000256" key="4">
    <source>
        <dbReference type="SAM" id="MobiDB-lite"/>
    </source>
</evidence>
<evidence type="ECO:0000269" key="5">
    <source>
    </source>
</evidence>
<evidence type="ECO:0000269" key="6">
    <source>
    </source>
</evidence>
<evidence type="ECO:0000303" key="7">
    <source>
    </source>
</evidence>
<evidence type="ECO:0000305" key="8"/>
<gene>
    <name type="primary">Tes</name>
</gene>
<name>TES_MOUSE</name>
<comment type="function">
    <text evidence="1">Scaffold protein that may play a role in cell adhesion, cell spreading and in the reorganization of the actin cytoskeleton. Plays a role in the regulation of cell proliferation. May act as a tumor suppressor (By similarity).</text>
</comment>
<comment type="subunit">
    <text evidence="1">Interacts via LIM domain 1 with ZYX. Interacts (via LIM domain 3) with ENAH and VASP. Interacts with ALKBH4, talin, actin, alpha-actinin, GRIP1 and PXN. Interacts (via LIM domain 2) with ACTL7A (via N-terminus). Heterodimer with ACTL7A; the heterodimer interacts with ENAH to form a heterotrimer (By similarity).</text>
</comment>
<comment type="subcellular location">
    <subcellularLocation>
        <location evidence="6">Cytoplasm</location>
    </subcellularLocation>
    <subcellularLocation>
        <location evidence="1">Cell junction</location>
        <location evidence="1">Focal adhesion</location>
    </subcellularLocation>
    <text evidence="1">Detected along actin stress fibers (By similarity). Detected at the subacrosomal layer in round spermatids.</text>
</comment>
<comment type="alternative products">
    <event type="alternative splicing"/>
    <isoform>
        <id>P47226-1</id>
        <name>TES2</name>
        <sequence type="displayed"/>
    </isoform>
    <isoform>
        <id>P47226-2</id>
        <name>TES1</name>
        <sequence type="described" ref="VSP_003123"/>
    </isoform>
</comment>
<comment type="tissue specificity">
    <text evidence="6">Detected at the acrosome of round spermatids (at protein level). Isoform TES1 transcript is highly expressed in adult testis and detected at low levels in other tissues. Isoform TES2 transcript is highly expressed in testis, kidney and spleen; intermediate in thymus, submaxillary gland and lung; detected at low levels in other tissues.</text>
</comment>
<comment type="domain">
    <text evidence="1">The N-terminal and the C-terminal halves of the protein can associate with each other, thereby hindering interactions with ZYX.</text>
</comment>
<comment type="disruption phenotype">
    <text evidence="5">Increased susceptibility to carcinogen-induced gastric cancer. This increase is seen both in homozygous knockout mice and in heterozygous mice missing only one copy of the gene.</text>
</comment>
<comment type="similarity">
    <text evidence="8">Belongs to the prickle / espinas / testin family.</text>
</comment>
<comment type="caution">
    <text evidence="8">Should not be confused with rat testin which is a thiol protease homolog.</text>
</comment>